<sequence length="379" mass="42605">MTNIRKTHPLLKIINSSFVDLPAPSSLSSWWNFGSLLGVCLGVQILTGLFLAMHYTSDTATAFNSVTHICRDVNYGWLLRYLHANGASMFFICLYLHVGRGLYYGSYTYSETWNIGILLLFAVMATAFMGYVLPWGQMSFWGATVITNLLSAIPYIGTDLVQWIWGGFSVDKATLTRFFAFHFLLPFIVTALVMVHLLFLHETGSNNPTGIPSDSDMIPFHPYYTIKDILGFLIMLTALSSLVLFSPDLLGDPDNYIPANPLNTPPHIKPEWYFLFAYAILRSIPNKLGGVLALVMSILILAIVPILHVSKQRSMMFRPLSQCLFWLLVAVLFTLTWIGGQPVEHPYIIIGQTASVLYFLIILILMPAISLTENYLLKW</sequence>
<feature type="chain" id="PRO_0000061698" description="Cytochrome b">
    <location>
        <begin position="1"/>
        <end position="379"/>
    </location>
</feature>
<feature type="transmembrane region" description="Helical" evidence="2">
    <location>
        <begin position="33"/>
        <end position="53"/>
    </location>
</feature>
<feature type="transmembrane region" description="Helical" evidence="2">
    <location>
        <begin position="77"/>
        <end position="98"/>
    </location>
</feature>
<feature type="transmembrane region" description="Helical" evidence="2">
    <location>
        <begin position="113"/>
        <end position="133"/>
    </location>
</feature>
<feature type="transmembrane region" description="Helical" evidence="2">
    <location>
        <begin position="178"/>
        <end position="198"/>
    </location>
</feature>
<feature type="transmembrane region" description="Helical" evidence="2">
    <location>
        <begin position="226"/>
        <end position="246"/>
    </location>
</feature>
<feature type="transmembrane region" description="Helical" evidence="2">
    <location>
        <begin position="288"/>
        <end position="308"/>
    </location>
</feature>
<feature type="transmembrane region" description="Helical" evidence="2">
    <location>
        <begin position="320"/>
        <end position="340"/>
    </location>
</feature>
<feature type="transmembrane region" description="Helical" evidence="2">
    <location>
        <begin position="347"/>
        <end position="367"/>
    </location>
</feature>
<feature type="binding site" description="axial binding residue" evidence="2">
    <location>
        <position position="83"/>
    </location>
    <ligand>
        <name>heme b</name>
        <dbReference type="ChEBI" id="CHEBI:60344"/>
        <label>b562</label>
    </ligand>
    <ligandPart>
        <name>Fe</name>
        <dbReference type="ChEBI" id="CHEBI:18248"/>
    </ligandPart>
</feature>
<feature type="binding site" description="axial binding residue" evidence="2">
    <location>
        <position position="97"/>
    </location>
    <ligand>
        <name>heme b</name>
        <dbReference type="ChEBI" id="CHEBI:60344"/>
        <label>b566</label>
    </ligand>
    <ligandPart>
        <name>Fe</name>
        <dbReference type="ChEBI" id="CHEBI:18248"/>
    </ligandPart>
</feature>
<feature type="binding site" description="axial binding residue" evidence="2">
    <location>
        <position position="182"/>
    </location>
    <ligand>
        <name>heme b</name>
        <dbReference type="ChEBI" id="CHEBI:60344"/>
        <label>b562</label>
    </ligand>
    <ligandPart>
        <name>Fe</name>
        <dbReference type="ChEBI" id="CHEBI:18248"/>
    </ligandPart>
</feature>
<feature type="binding site" description="axial binding residue" evidence="2">
    <location>
        <position position="196"/>
    </location>
    <ligand>
        <name>heme b</name>
        <dbReference type="ChEBI" id="CHEBI:60344"/>
        <label>b566</label>
    </ligand>
    <ligandPart>
        <name>Fe</name>
        <dbReference type="ChEBI" id="CHEBI:18248"/>
    </ligandPart>
</feature>
<feature type="binding site" evidence="2">
    <location>
        <position position="201"/>
    </location>
    <ligand>
        <name>a ubiquinone</name>
        <dbReference type="ChEBI" id="CHEBI:16389"/>
    </ligand>
</feature>
<feature type="sequence variant" description="In strain: Isolate TK 34552 and Isolate TK 34560.">
    <original>N</original>
    <variation>T</variation>
    <location>
        <position position="15"/>
    </location>
</feature>
<feature type="sequence variant" description="In strain: Isolate TK 40095, Isolate TK 40403 and Isolate TK 40411.">
    <original>A</original>
    <variation>G</variation>
    <location>
        <position position="152"/>
    </location>
</feature>
<feature type="sequence variant" description="In strain: Isolate TK 40114 and Isolate TK 40403.">
    <original>V</original>
    <variation>G</variation>
    <location>
        <position position="161"/>
    </location>
</feature>
<feature type="sequence variant" description="In strain: Isolate TK 40043 and Isolate TK 40140.">
    <original>D</original>
    <variation>H</variation>
    <location>
        <position position="171"/>
    </location>
</feature>
<feature type="sequence variant" description="In strain: Isolate MVZ 168867, Isolate MVZ 192681, Isolate ROM 104264, Isolate ROM 104368, Isolate ROM 105930, Isolate TK 14522, Isolate TK 17624, Isolate TK 34552, Isolate TK 34555, Isolate TK 34560, Isolate TK 34836, Isolate TK 34842, Isolate TK 34963, Isolate TK 40043, Isolate TK 40082, Isolate TK 40084, Isolate TK 40095, Isolate TK 40099, Isolate TK 40107, Isolate TK 40111, Isolate TK 40114, Isolate TK 40139, Isolate TK 40314, Isolate TK 40318, Isolate TK 40398, Isolate TK 40399, Isolate TK 40401, Isolate TK 40402, Isolate TK 40403, Isolate TK 40406, Isolate TK 40408, Isolate TK 40409, Isolate TK 40410, Isolate TK 40411, Isolate TK 40414, Isolate TK 104603 and Isolate TK 104630.">
    <original>T</original>
    <variation>A</variation>
    <location>
        <position position="190"/>
    </location>
</feature>
<feature type="sequence variant" description="In strain: Isolate TK 40140.">
    <original>F</original>
    <variation>I</variation>
    <location>
        <position position="220"/>
    </location>
</feature>
<feature type="sequence variant" description="In strain: Isolate ROM 104264.">
    <original>F</original>
    <variation>L</variation>
    <location>
        <position position="274"/>
    </location>
</feature>
<feature type="sequence variant" description="In strain: Isolate TK 40403.">
    <original>F</original>
    <variation>L</variation>
    <location>
        <position position="333"/>
    </location>
</feature>
<feature type="sequence variant" description="In strain: Isolate TK 40314 and Isolate TK 40318.">
    <original>V</original>
    <variation>A</variation>
    <location>
        <position position="356"/>
    </location>
</feature>
<feature type="sequence conflict" description="In Ref. 2; AAA32135." evidence="5" ref="2">
    <original>R</original>
    <variation>L</variation>
    <location>
        <position position="5"/>
    </location>
</feature>
<feature type="sequence conflict" description="In Ref. 2; AAA32135." evidence="5" ref="2">
    <original>S</original>
    <variation>W</variation>
    <location>
        <position position="106"/>
    </location>
</feature>
<geneLocation type="mitochondrion"/>
<dbReference type="EMBL" id="AY169900">
    <property type="protein sequence ID" value="AAO41776.1"/>
    <property type="molecule type" value="Genomic_DNA"/>
</dbReference>
<dbReference type="EMBL" id="AY169901">
    <property type="protein sequence ID" value="AAO41777.1"/>
    <property type="molecule type" value="Genomic_DNA"/>
</dbReference>
<dbReference type="EMBL" id="AY169902">
    <property type="protein sequence ID" value="AAO41778.1"/>
    <property type="molecule type" value="Genomic_DNA"/>
</dbReference>
<dbReference type="EMBL" id="AY169906">
    <property type="protein sequence ID" value="AAO41782.1"/>
    <property type="molecule type" value="Genomic_DNA"/>
</dbReference>
<dbReference type="EMBL" id="AY169908">
    <property type="protein sequence ID" value="AAO41784.1"/>
    <property type="molecule type" value="Genomic_DNA"/>
</dbReference>
<dbReference type="EMBL" id="AY169909">
    <property type="protein sequence ID" value="AAO41785.1"/>
    <property type="molecule type" value="Genomic_DNA"/>
</dbReference>
<dbReference type="EMBL" id="AY169911">
    <property type="protein sequence ID" value="AAO41787.1"/>
    <property type="molecule type" value="Genomic_DNA"/>
</dbReference>
<dbReference type="EMBL" id="AY169912">
    <property type="protein sequence ID" value="AAO41788.1"/>
    <property type="molecule type" value="Genomic_DNA"/>
</dbReference>
<dbReference type="EMBL" id="AY169913">
    <property type="protein sequence ID" value="AAO41789.1"/>
    <property type="molecule type" value="Genomic_DNA"/>
</dbReference>
<dbReference type="EMBL" id="AY169916">
    <property type="protein sequence ID" value="AAO41792.1"/>
    <property type="molecule type" value="Genomic_DNA"/>
</dbReference>
<dbReference type="EMBL" id="AY169917">
    <property type="protein sequence ID" value="AAO41793.1"/>
    <property type="molecule type" value="Genomic_DNA"/>
</dbReference>
<dbReference type="EMBL" id="AY169918">
    <property type="protein sequence ID" value="AAO41794.1"/>
    <property type="molecule type" value="Genomic_DNA"/>
</dbReference>
<dbReference type="EMBL" id="AY169919">
    <property type="protein sequence ID" value="AAO41795.1"/>
    <property type="molecule type" value="Genomic_DNA"/>
</dbReference>
<dbReference type="EMBL" id="AY169920">
    <property type="protein sequence ID" value="AAO41796.1"/>
    <property type="molecule type" value="Genomic_DNA"/>
</dbReference>
<dbReference type="EMBL" id="AY169921">
    <property type="protein sequence ID" value="AAO41797.1"/>
    <property type="molecule type" value="Genomic_DNA"/>
</dbReference>
<dbReference type="EMBL" id="AY169922">
    <property type="protein sequence ID" value="AAO41798.1"/>
    <property type="molecule type" value="Genomic_DNA"/>
</dbReference>
<dbReference type="EMBL" id="AY169923">
    <property type="protein sequence ID" value="AAO41799.1"/>
    <property type="molecule type" value="Genomic_DNA"/>
</dbReference>
<dbReference type="EMBL" id="AY169924">
    <property type="protein sequence ID" value="AAO41800.1"/>
    <property type="molecule type" value="Genomic_DNA"/>
</dbReference>
<dbReference type="EMBL" id="AY169925">
    <property type="protein sequence ID" value="AAO41801.1"/>
    <property type="molecule type" value="Genomic_DNA"/>
</dbReference>
<dbReference type="EMBL" id="AY169926">
    <property type="protein sequence ID" value="AAO41802.1"/>
    <property type="molecule type" value="Genomic_DNA"/>
</dbReference>
<dbReference type="EMBL" id="AY169927">
    <property type="protein sequence ID" value="AAO41803.1"/>
    <property type="molecule type" value="Genomic_DNA"/>
</dbReference>
<dbReference type="EMBL" id="AY169928">
    <property type="protein sequence ID" value="AAO41804.1"/>
    <property type="molecule type" value="Genomic_DNA"/>
</dbReference>
<dbReference type="EMBL" id="AY169929">
    <property type="protein sequence ID" value="AAO41805.1"/>
    <property type="molecule type" value="Genomic_DNA"/>
</dbReference>
<dbReference type="EMBL" id="AY169930">
    <property type="protein sequence ID" value="AAO41806.1"/>
    <property type="molecule type" value="Genomic_DNA"/>
</dbReference>
<dbReference type="EMBL" id="AY169931">
    <property type="protein sequence ID" value="AAO41807.1"/>
    <property type="molecule type" value="Genomic_DNA"/>
</dbReference>
<dbReference type="EMBL" id="AY169932">
    <property type="protein sequence ID" value="AAO41808.1"/>
    <property type="molecule type" value="Genomic_DNA"/>
</dbReference>
<dbReference type="EMBL" id="AY169933">
    <property type="protein sequence ID" value="AAO41809.1"/>
    <property type="molecule type" value="Genomic_DNA"/>
</dbReference>
<dbReference type="EMBL" id="AY169934">
    <property type="protein sequence ID" value="AAO41810.1"/>
    <property type="molecule type" value="Genomic_DNA"/>
</dbReference>
<dbReference type="EMBL" id="AY169935">
    <property type="protein sequence ID" value="AAO41811.1"/>
    <property type="molecule type" value="Genomic_DNA"/>
</dbReference>
<dbReference type="EMBL" id="AY169936">
    <property type="protein sequence ID" value="AAO41812.1"/>
    <property type="molecule type" value="Genomic_DNA"/>
</dbReference>
<dbReference type="EMBL" id="AY169937">
    <property type="protein sequence ID" value="AAO41813.1"/>
    <property type="molecule type" value="Genomic_DNA"/>
</dbReference>
<dbReference type="EMBL" id="AY169938">
    <property type="protein sequence ID" value="AAO41814.1"/>
    <property type="molecule type" value="Genomic_DNA"/>
</dbReference>
<dbReference type="EMBL" id="AY169939">
    <property type="protein sequence ID" value="AAO41815.1"/>
    <property type="molecule type" value="Genomic_DNA"/>
</dbReference>
<dbReference type="EMBL" id="AY169940">
    <property type="protein sequence ID" value="AAO41816.1"/>
    <property type="molecule type" value="Genomic_DNA"/>
</dbReference>
<dbReference type="EMBL" id="AY169941">
    <property type="protein sequence ID" value="AAO41817.1"/>
    <property type="molecule type" value="Genomic_DNA"/>
</dbReference>
<dbReference type="EMBL" id="AY169942">
    <property type="protein sequence ID" value="AAO41818.1"/>
    <property type="molecule type" value="Genomic_DNA"/>
</dbReference>
<dbReference type="EMBL" id="AY169943">
    <property type="protein sequence ID" value="AAO41819.1"/>
    <property type="molecule type" value="Genomic_DNA"/>
</dbReference>
<dbReference type="EMBL" id="AY169944">
    <property type="protein sequence ID" value="AAO41820.1"/>
    <property type="molecule type" value="Genomic_DNA"/>
</dbReference>
<dbReference type="EMBL" id="AY169945">
    <property type="protein sequence ID" value="AAO41821.1"/>
    <property type="molecule type" value="Genomic_DNA"/>
</dbReference>
<dbReference type="EMBL" id="AY169946">
    <property type="protein sequence ID" value="AAO41822.1"/>
    <property type="molecule type" value="Genomic_DNA"/>
</dbReference>
<dbReference type="EMBL" id="AY169947">
    <property type="protein sequence ID" value="AAO41823.1"/>
    <property type="molecule type" value="Genomic_DNA"/>
</dbReference>
<dbReference type="EMBL" id="AY169948">
    <property type="protein sequence ID" value="AAO41824.1"/>
    <property type="molecule type" value="Genomic_DNA"/>
</dbReference>
<dbReference type="EMBL" id="AY169949">
    <property type="protein sequence ID" value="AAO41825.1"/>
    <property type="molecule type" value="Genomic_DNA"/>
</dbReference>
<dbReference type="EMBL" id="AY169950">
    <property type="protein sequence ID" value="AAO41826.1"/>
    <property type="molecule type" value="Genomic_DNA"/>
</dbReference>
<dbReference type="EMBL" id="AY169951">
    <property type="protein sequence ID" value="AAO41827.1"/>
    <property type="molecule type" value="Genomic_DNA"/>
</dbReference>
<dbReference type="EMBL" id="AY169952">
    <property type="protein sequence ID" value="AAO41828.1"/>
    <property type="molecule type" value="Genomic_DNA"/>
</dbReference>
<dbReference type="EMBL" id="AY169953">
    <property type="protein sequence ID" value="AAO41829.1"/>
    <property type="molecule type" value="Genomic_DNA"/>
</dbReference>
<dbReference type="EMBL" id="AY169954">
    <property type="protein sequence ID" value="AAO41830.1"/>
    <property type="molecule type" value="Genomic_DNA"/>
</dbReference>
<dbReference type="EMBL" id="AY169955">
    <property type="protein sequence ID" value="AAO41831.1"/>
    <property type="molecule type" value="Genomic_DNA"/>
</dbReference>
<dbReference type="EMBL" id="L19519">
    <property type="protein sequence ID" value="AAA32135.1"/>
    <property type="molecule type" value="Genomic_DNA"/>
</dbReference>
<dbReference type="SMR" id="Q36201"/>
<dbReference type="GO" id="GO:0005743">
    <property type="term" value="C:mitochondrial inner membrane"/>
    <property type="evidence" value="ECO:0007669"/>
    <property type="project" value="UniProtKB-SubCell"/>
</dbReference>
<dbReference type="GO" id="GO:0045275">
    <property type="term" value="C:respiratory chain complex III"/>
    <property type="evidence" value="ECO:0007669"/>
    <property type="project" value="InterPro"/>
</dbReference>
<dbReference type="GO" id="GO:0046872">
    <property type="term" value="F:metal ion binding"/>
    <property type="evidence" value="ECO:0007669"/>
    <property type="project" value="UniProtKB-KW"/>
</dbReference>
<dbReference type="GO" id="GO:0008121">
    <property type="term" value="F:ubiquinol-cytochrome-c reductase activity"/>
    <property type="evidence" value="ECO:0007669"/>
    <property type="project" value="InterPro"/>
</dbReference>
<dbReference type="GO" id="GO:0006122">
    <property type="term" value="P:mitochondrial electron transport, ubiquinol to cytochrome c"/>
    <property type="evidence" value="ECO:0007669"/>
    <property type="project" value="TreeGrafter"/>
</dbReference>
<dbReference type="CDD" id="cd00290">
    <property type="entry name" value="cytochrome_b_C"/>
    <property type="match status" value="1"/>
</dbReference>
<dbReference type="CDD" id="cd00284">
    <property type="entry name" value="Cytochrome_b_N"/>
    <property type="match status" value="1"/>
</dbReference>
<dbReference type="FunFam" id="1.20.810.10:FF:000002">
    <property type="entry name" value="Cytochrome b"/>
    <property type="match status" value="1"/>
</dbReference>
<dbReference type="Gene3D" id="1.20.810.10">
    <property type="entry name" value="Cytochrome Bc1 Complex, Chain C"/>
    <property type="match status" value="1"/>
</dbReference>
<dbReference type="InterPro" id="IPR005798">
    <property type="entry name" value="Cyt_b/b6_C"/>
</dbReference>
<dbReference type="InterPro" id="IPR036150">
    <property type="entry name" value="Cyt_b/b6_C_sf"/>
</dbReference>
<dbReference type="InterPro" id="IPR005797">
    <property type="entry name" value="Cyt_b/b6_N"/>
</dbReference>
<dbReference type="InterPro" id="IPR027387">
    <property type="entry name" value="Cytb/b6-like_sf"/>
</dbReference>
<dbReference type="InterPro" id="IPR030689">
    <property type="entry name" value="Cytochrome_b"/>
</dbReference>
<dbReference type="InterPro" id="IPR048260">
    <property type="entry name" value="Cytochrome_b_C_euk/bac"/>
</dbReference>
<dbReference type="InterPro" id="IPR048259">
    <property type="entry name" value="Cytochrome_b_N_euk/bac"/>
</dbReference>
<dbReference type="InterPro" id="IPR016174">
    <property type="entry name" value="Di-haem_cyt_TM"/>
</dbReference>
<dbReference type="PANTHER" id="PTHR19271">
    <property type="entry name" value="CYTOCHROME B"/>
    <property type="match status" value="1"/>
</dbReference>
<dbReference type="PANTHER" id="PTHR19271:SF16">
    <property type="entry name" value="CYTOCHROME B"/>
    <property type="match status" value="1"/>
</dbReference>
<dbReference type="Pfam" id="PF00032">
    <property type="entry name" value="Cytochrom_B_C"/>
    <property type="match status" value="1"/>
</dbReference>
<dbReference type="Pfam" id="PF00033">
    <property type="entry name" value="Cytochrome_B"/>
    <property type="match status" value="1"/>
</dbReference>
<dbReference type="PIRSF" id="PIRSF038885">
    <property type="entry name" value="COB"/>
    <property type="match status" value="1"/>
</dbReference>
<dbReference type="SUPFAM" id="SSF81648">
    <property type="entry name" value="a domain/subunit of cytochrome bc1 complex (Ubiquinol-cytochrome c reductase)"/>
    <property type="match status" value="1"/>
</dbReference>
<dbReference type="SUPFAM" id="SSF81342">
    <property type="entry name" value="Transmembrane di-heme cytochromes"/>
    <property type="match status" value="1"/>
</dbReference>
<dbReference type="PROSITE" id="PS51003">
    <property type="entry name" value="CYTB_CTER"/>
    <property type="match status" value="1"/>
</dbReference>
<dbReference type="PROSITE" id="PS51002">
    <property type="entry name" value="CYTB_NTER"/>
    <property type="match status" value="1"/>
</dbReference>
<evidence type="ECO:0000250" key="1"/>
<evidence type="ECO:0000250" key="2">
    <source>
        <dbReference type="UniProtKB" id="P00157"/>
    </source>
</evidence>
<evidence type="ECO:0000255" key="3">
    <source>
        <dbReference type="PROSITE-ProRule" id="PRU00967"/>
    </source>
</evidence>
<evidence type="ECO:0000255" key="4">
    <source>
        <dbReference type="PROSITE-ProRule" id="PRU00968"/>
    </source>
</evidence>
<evidence type="ECO:0000305" key="5"/>
<accession>Q36201</accession>
<accession>Q6Y8K0</accession>
<accession>Q6Y8K3</accession>
<accession>Q6Y8K5</accession>
<accession>Q6Y8L0</accession>
<accession>Q6Y8M3</accession>
<accession>Q6Y8M5</accession>
<accession>Q6Y8N0</accession>
<accession>Q6Y8N6</accession>
<accession>Q6Y8P2</accession>
<accession>Q6Y8Q2</accession>
<gene>
    <name type="primary">MT-CYB</name>
    <name type="synonym">COB</name>
    <name type="synonym">CYTB</name>
    <name type="synonym">MTCYB</name>
</gene>
<name>CYB_UROBI</name>
<keyword id="KW-0249">Electron transport</keyword>
<keyword id="KW-0349">Heme</keyword>
<keyword id="KW-0408">Iron</keyword>
<keyword id="KW-0472">Membrane</keyword>
<keyword id="KW-0479">Metal-binding</keyword>
<keyword id="KW-0496">Mitochondrion</keyword>
<keyword id="KW-0999">Mitochondrion inner membrane</keyword>
<keyword id="KW-0679">Respiratory chain</keyword>
<keyword id="KW-0812">Transmembrane</keyword>
<keyword id="KW-1133">Transmembrane helix</keyword>
<keyword id="KW-0813">Transport</keyword>
<keyword id="KW-0830">Ubiquinone</keyword>
<comment type="function">
    <text evidence="2">Component of the ubiquinol-cytochrome c reductase complex (complex III or cytochrome b-c1 complex) that is part of the mitochondrial respiratory chain. The b-c1 complex mediates electron transfer from ubiquinol to cytochrome c. Contributes to the generation of a proton gradient across the mitochondrial membrane that is then used for ATP synthesis.</text>
</comment>
<comment type="cofactor">
    <cofactor evidence="2">
        <name>heme b</name>
        <dbReference type="ChEBI" id="CHEBI:60344"/>
    </cofactor>
    <text evidence="2">Binds 2 heme b groups non-covalently.</text>
</comment>
<comment type="subunit">
    <text evidence="2">The cytochrome bc1 complex contains 11 subunits: 3 respiratory subunits (MT-CYB, CYC1 and UQCRFS1), 2 core proteins (UQCRC1 and UQCRC2) and 6 low-molecular weight proteins (UQCRH/QCR6, UQCRB/QCR7, UQCRQ/QCR8, UQCR10/QCR9, UQCR11/QCR10 and a cleavage product of UQCRFS1). This cytochrome bc1 complex then forms a dimer.</text>
</comment>
<comment type="subcellular location">
    <subcellularLocation>
        <location evidence="2">Mitochondrion inner membrane</location>
        <topology evidence="2">Multi-pass membrane protein</topology>
    </subcellularLocation>
</comment>
<comment type="miscellaneous">
    <text evidence="1">Heme 1 (or BL or b562) is low-potential and absorbs at about 562 nm, and heme 2 (or BH or b566) is high-potential and absorbs at about 566 nm.</text>
</comment>
<comment type="similarity">
    <text evidence="3 4">Belongs to the cytochrome b family.</text>
</comment>
<comment type="caution">
    <text evidence="2">The full-length protein contains only eight transmembrane helices, not nine as predicted by bioinformatics tools.</text>
</comment>
<protein>
    <recommendedName>
        <fullName>Cytochrome b</fullName>
    </recommendedName>
    <alternativeName>
        <fullName>Complex III subunit 3</fullName>
    </alternativeName>
    <alternativeName>
        <fullName>Complex III subunit III</fullName>
    </alternativeName>
    <alternativeName>
        <fullName>Cytochrome b-c1 complex subunit 3</fullName>
    </alternativeName>
    <alternativeName>
        <fullName>Ubiquinol-cytochrome-c reductase complex cytochrome b subunit</fullName>
    </alternativeName>
</protein>
<organism>
    <name type="scientific">Uroderma bilobatum</name>
    <name type="common">Tent-making bat</name>
    <dbReference type="NCBI Taxonomy" id="27663"/>
    <lineage>
        <taxon>Eukaryota</taxon>
        <taxon>Metazoa</taxon>
        <taxon>Chordata</taxon>
        <taxon>Craniata</taxon>
        <taxon>Vertebrata</taxon>
        <taxon>Euteleostomi</taxon>
        <taxon>Mammalia</taxon>
        <taxon>Eutheria</taxon>
        <taxon>Laurasiatheria</taxon>
        <taxon>Chiroptera</taxon>
        <taxon>Yangochiroptera</taxon>
        <taxon>Phyllostomidae</taxon>
        <taxon>Stenodermatinae</taxon>
        <taxon>Uroderma</taxon>
    </lineage>
</organism>
<reference key="1">
    <citation type="journal article" date="2003" name="Mol. Ecol.">
        <title>mtDNA perspective of chromosomal diversification and hybridization in Peters' tent-making bat (Uroderma bilobatum: Phyllostomidae).</title>
        <authorList>
            <person name="Hoffmann F.G."/>
            <person name="Owen J.G."/>
            <person name="Baker R.J."/>
        </authorList>
    </citation>
    <scope>NUCLEOTIDE SEQUENCE [GENOMIC DNA]</scope>
    <source>
        <strain>Isolate MVZ 168867</strain>
        <strain>Isolate MVZ 192681</strain>
        <strain>Isolate ROM 104264</strain>
        <strain>Isolate ROM 104368</strain>
        <strain>Isolate ROM 105930</strain>
        <strain>Isolate TK 104603</strain>
        <strain>Isolate TK 104630</strain>
        <strain>Isolate TK 14522</strain>
        <strain>Isolate TK 17624</strain>
        <strain>Isolate TK 22594</strain>
        <strain>Isolate TK 34552</strain>
        <strain>Isolate TK 34555</strain>
        <strain>Isolate TK 34560</strain>
        <strain>Isolate TK 34567</strain>
        <strain>Isolate TK 34836</strain>
        <strain>Isolate TK 34842</strain>
        <strain>Isolate TK 34914</strain>
        <strain>Isolate TK 34963</strain>
        <strain>Isolate TK 34964</strain>
        <strain>Isolate TK 40011</strain>
        <strain>Isolate TK 40043</strain>
        <strain>Isolate TK 40045</strain>
        <strain>Isolate TK 40082</strain>
        <strain>Isolate TK 40084</strain>
        <strain>Isolate TK 40095</strain>
        <strain>Isolate TK 40099</strain>
        <strain>Isolate TK 40107</strain>
        <strain>Isolate TK 40111</strain>
        <strain>Isolate TK 40114</strain>
        <strain>Isolate TK 40139</strain>
        <strain>Isolate TK 40140</strain>
        <strain>Isolate TK 40314</strain>
        <strain>Isolate TK 40318</strain>
        <strain>Isolate TK 40398</strain>
        <strain>Isolate TK 40399</strain>
        <strain>Isolate TK 40400</strain>
        <strain>Isolate TK 40401</strain>
        <strain>Isolate TK 40402</strain>
        <strain>Isolate TK 40403</strain>
        <strain>Isolate TK 40404</strain>
        <strain>Isolate TK 40405</strain>
        <strain>Isolate TK 40406</strain>
        <strain>Isolate TK 40408</strain>
        <strain>Isolate TK 40409</strain>
        <strain>Isolate TK 40410</strain>
        <strain>Isolate TK 40411</strain>
        <strain>Isolate TK 40412</strain>
        <strain>Isolate TK 40413</strain>
        <strain>Isolate TK 40414</strain>
    </source>
</reference>
<reference key="2">
    <citation type="journal article" date="1993" name="Mol. Biol. Evol.">
        <title>Molecular phylogenetics of Stenodermatini bat genera: congruence of data from nuclear and mitochondrial DNA.</title>
        <authorList>
            <person name="den Bussche R.A."/>
            <person name="Baker R.J."/>
            <person name="Wichman H.A."/>
            <person name="Hamilton M.J."/>
        </authorList>
    </citation>
    <scope>NUCLEOTIDE SEQUENCE [GENOMIC DNA] OF 1-134</scope>
    <source>
        <strain>Isolate TK 25256</strain>
        <tissue>Muscle</tissue>
    </source>
</reference>
<proteinExistence type="inferred from homology"/>